<comment type="function">
    <text evidence="1">Catalyzes the decarboxylative condensation of pimeloyl-[acyl-carrier protein] and L-alanine to produce 8-amino-7-oxononanoate (AON), [acyl-carrier protein], and carbon dioxide.</text>
</comment>
<comment type="catalytic activity">
    <reaction evidence="1">
        <text>6-carboxyhexanoyl-[ACP] + L-alanine + H(+) = (8S)-8-amino-7-oxononanoate + holo-[ACP] + CO2</text>
        <dbReference type="Rhea" id="RHEA:42288"/>
        <dbReference type="Rhea" id="RHEA-COMP:9685"/>
        <dbReference type="Rhea" id="RHEA-COMP:9955"/>
        <dbReference type="ChEBI" id="CHEBI:15378"/>
        <dbReference type="ChEBI" id="CHEBI:16526"/>
        <dbReference type="ChEBI" id="CHEBI:57972"/>
        <dbReference type="ChEBI" id="CHEBI:64479"/>
        <dbReference type="ChEBI" id="CHEBI:78846"/>
        <dbReference type="ChEBI" id="CHEBI:149468"/>
        <dbReference type="EC" id="2.3.1.47"/>
    </reaction>
</comment>
<comment type="cofactor">
    <cofactor evidence="1">
        <name>pyridoxal 5'-phosphate</name>
        <dbReference type="ChEBI" id="CHEBI:597326"/>
    </cofactor>
</comment>
<comment type="pathway">
    <text evidence="1">Cofactor biosynthesis; biotin biosynthesis.</text>
</comment>
<comment type="subunit">
    <text evidence="1">Homodimer.</text>
</comment>
<comment type="similarity">
    <text evidence="1">Belongs to the class-II pyridoxal-phosphate-dependent aminotransferase family. BioF subfamily.</text>
</comment>
<dbReference type="EC" id="2.3.1.47" evidence="1"/>
<dbReference type="EMBL" id="CP000857">
    <property type="protein sequence ID" value="ACN44965.1"/>
    <property type="molecule type" value="Genomic_DNA"/>
</dbReference>
<dbReference type="RefSeq" id="WP_000118946.1">
    <property type="nucleotide sequence ID" value="NC_012125.1"/>
</dbReference>
<dbReference type="SMR" id="C0PWY3"/>
<dbReference type="KEGG" id="sei:SPC_0791"/>
<dbReference type="HOGENOM" id="CLU_015846_11_2_6"/>
<dbReference type="UniPathway" id="UPA00078"/>
<dbReference type="Proteomes" id="UP000001599">
    <property type="component" value="Chromosome"/>
</dbReference>
<dbReference type="GO" id="GO:0008710">
    <property type="term" value="F:8-amino-7-oxononanoate synthase activity"/>
    <property type="evidence" value="ECO:0007669"/>
    <property type="project" value="UniProtKB-UniRule"/>
</dbReference>
<dbReference type="GO" id="GO:0030170">
    <property type="term" value="F:pyridoxal phosphate binding"/>
    <property type="evidence" value="ECO:0007669"/>
    <property type="project" value="UniProtKB-UniRule"/>
</dbReference>
<dbReference type="GO" id="GO:0009102">
    <property type="term" value="P:biotin biosynthetic process"/>
    <property type="evidence" value="ECO:0007669"/>
    <property type="project" value="UniProtKB-UniRule"/>
</dbReference>
<dbReference type="CDD" id="cd06454">
    <property type="entry name" value="KBL_like"/>
    <property type="match status" value="1"/>
</dbReference>
<dbReference type="FunFam" id="3.40.640.10:FF:000095">
    <property type="entry name" value="8-amino-7-oxononanoate synthase"/>
    <property type="match status" value="1"/>
</dbReference>
<dbReference type="Gene3D" id="3.90.1150.10">
    <property type="entry name" value="Aspartate Aminotransferase, domain 1"/>
    <property type="match status" value="1"/>
</dbReference>
<dbReference type="Gene3D" id="3.40.640.10">
    <property type="entry name" value="Type I PLP-dependent aspartate aminotransferase-like (Major domain)"/>
    <property type="match status" value="1"/>
</dbReference>
<dbReference type="HAMAP" id="MF_01693">
    <property type="entry name" value="BioF_aminotrans_2"/>
    <property type="match status" value="1"/>
</dbReference>
<dbReference type="InterPro" id="IPR001917">
    <property type="entry name" value="Aminotrans_II_pyridoxalP_BS"/>
</dbReference>
<dbReference type="InterPro" id="IPR004839">
    <property type="entry name" value="Aminotransferase_I/II_large"/>
</dbReference>
<dbReference type="InterPro" id="IPR050087">
    <property type="entry name" value="AON_synthase_class-II"/>
</dbReference>
<dbReference type="InterPro" id="IPR004723">
    <property type="entry name" value="AONS_Archaea/Proteobacteria"/>
</dbReference>
<dbReference type="InterPro" id="IPR022834">
    <property type="entry name" value="AONS_Proteobacteria"/>
</dbReference>
<dbReference type="InterPro" id="IPR015424">
    <property type="entry name" value="PyrdxlP-dep_Trfase"/>
</dbReference>
<dbReference type="InterPro" id="IPR015421">
    <property type="entry name" value="PyrdxlP-dep_Trfase_major"/>
</dbReference>
<dbReference type="InterPro" id="IPR015422">
    <property type="entry name" value="PyrdxlP-dep_Trfase_small"/>
</dbReference>
<dbReference type="NCBIfam" id="TIGR00858">
    <property type="entry name" value="bioF"/>
    <property type="match status" value="1"/>
</dbReference>
<dbReference type="PANTHER" id="PTHR13693:SF100">
    <property type="entry name" value="8-AMINO-7-OXONONANOATE SYNTHASE"/>
    <property type="match status" value="1"/>
</dbReference>
<dbReference type="PANTHER" id="PTHR13693">
    <property type="entry name" value="CLASS II AMINOTRANSFERASE/8-AMINO-7-OXONONANOATE SYNTHASE"/>
    <property type="match status" value="1"/>
</dbReference>
<dbReference type="Pfam" id="PF00155">
    <property type="entry name" value="Aminotran_1_2"/>
    <property type="match status" value="1"/>
</dbReference>
<dbReference type="SUPFAM" id="SSF53383">
    <property type="entry name" value="PLP-dependent transferases"/>
    <property type="match status" value="1"/>
</dbReference>
<dbReference type="PROSITE" id="PS00599">
    <property type="entry name" value="AA_TRANSFER_CLASS_2"/>
    <property type="match status" value="1"/>
</dbReference>
<organism>
    <name type="scientific">Salmonella paratyphi C (strain RKS4594)</name>
    <dbReference type="NCBI Taxonomy" id="476213"/>
    <lineage>
        <taxon>Bacteria</taxon>
        <taxon>Pseudomonadati</taxon>
        <taxon>Pseudomonadota</taxon>
        <taxon>Gammaproteobacteria</taxon>
        <taxon>Enterobacterales</taxon>
        <taxon>Enterobacteriaceae</taxon>
        <taxon>Salmonella</taxon>
    </lineage>
</organism>
<reference key="1">
    <citation type="journal article" date="2009" name="PLoS ONE">
        <title>Salmonella paratyphi C: genetic divergence from Salmonella choleraesuis and pathogenic convergence with Salmonella typhi.</title>
        <authorList>
            <person name="Liu W.-Q."/>
            <person name="Feng Y."/>
            <person name="Wang Y."/>
            <person name="Zou Q.-H."/>
            <person name="Chen F."/>
            <person name="Guo J.-T."/>
            <person name="Peng Y.-H."/>
            <person name="Jin Y."/>
            <person name="Li Y.-G."/>
            <person name="Hu S.-N."/>
            <person name="Johnston R.N."/>
            <person name="Liu G.-R."/>
            <person name="Liu S.-L."/>
        </authorList>
    </citation>
    <scope>NUCLEOTIDE SEQUENCE [LARGE SCALE GENOMIC DNA]</scope>
    <source>
        <strain>RKS4594</strain>
    </source>
</reference>
<feature type="chain" id="PRO_0000381102" description="8-amino-7-oxononanoate synthase">
    <location>
        <begin position="1"/>
        <end position="385"/>
    </location>
</feature>
<feature type="binding site" evidence="1">
    <location>
        <position position="21"/>
    </location>
    <ligand>
        <name>substrate</name>
    </ligand>
</feature>
<feature type="binding site" evidence="1">
    <location>
        <begin position="108"/>
        <end position="109"/>
    </location>
    <ligand>
        <name>pyridoxal 5'-phosphate</name>
        <dbReference type="ChEBI" id="CHEBI:597326"/>
    </ligand>
</feature>
<feature type="binding site" evidence="1">
    <location>
        <position position="133"/>
    </location>
    <ligand>
        <name>substrate</name>
    </ligand>
</feature>
<feature type="binding site" evidence="1">
    <location>
        <position position="179"/>
    </location>
    <ligand>
        <name>pyridoxal 5'-phosphate</name>
        <dbReference type="ChEBI" id="CHEBI:597326"/>
    </ligand>
</feature>
<feature type="binding site" evidence="1">
    <location>
        <position position="207"/>
    </location>
    <ligand>
        <name>pyridoxal 5'-phosphate</name>
        <dbReference type="ChEBI" id="CHEBI:597326"/>
    </ligand>
</feature>
<feature type="binding site" evidence="1">
    <location>
        <position position="233"/>
    </location>
    <ligand>
        <name>pyridoxal 5'-phosphate</name>
        <dbReference type="ChEBI" id="CHEBI:597326"/>
    </ligand>
</feature>
<feature type="binding site" evidence="1">
    <location>
        <position position="352"/>
    </location>
    <ligand>
        <name>substrate</name>
    </ligand>
</feature>
<feature type="modified residue" description="N6-(pyridoxal phosphate)lysine" evidence="1">
    <location>
        <position position="236"/>
    </location>
</feature>
<keyword id="KW-0093">Biotin biosynthesis</keyword>
<keyword id="KW-0663">Pyridoxal phosphate</keyword>
<keyword id="KW-0808">Transferase</keyword>
<protein>
    <recommendedName>
        <fullName evidence="1">8-amino-7-oxononanoate synthase</fullName>
        <shortName evidence="1">AONS</shortName>
        <ecNumber evidence="1">2.3.1.47</ecNumber>
    </recommendedName>
    <alternativeName>
        <fullName evidence="1">7-keto-8-amino-pelargonic acid synthase</fullName>
        <shortName evidence="1">7-KAP synthase</shortName>
        <shortName evidence="1">KAPA synthase</shortName>
    </alternativeName>
    <alternativeName>
        <fullName evidence="1">8-amino-7-ketopelargonate synthase</fullName>
    </alternativeName>
</protein>
<gene>
    <name evidence="1" type="primary">bioF</name>
    <name type="ordered locus">SPC_0791</name>
</gene>
<sequence length="385" mass="41987">MSWQQRVDDALTARRATDTLRRRYVVSQGAGRWLVANGRQYLNFSSNDYLGLSQHPQIIRAWQQAATRFGVGSGGSGHISGYSVAHRALEEELAQWLGYPRALLFISGFAANQAVITALMKKNDRIVADRLSHASLLEAANLSPAQLRRFIHNDTQHLSRLLQSPCVGQQLVVTEGVYSMDGDSAPLAEIQHIARRHHAWLLVDDAHGIGVTGDEGRGTCCQRGVKPELLVVTFGKGFGVSGAAVLCSESVADYLLQFARHLVYSTSMPPAQAQALSASLAVIRSDEGRERREKLAALVQRFRAGVNASRFTLLNAHSAIQPLIVGDNSRALRLAEALRQQGCWATAIRPPTVPVGTARLRLTLTQAHEACDIDRLLEVLHGAGE</sequence>
<evidence type="ECO:0000255" key="1">
    <source>
        <dbReference type="HAMAP-Rule" id="MF_01693"/>
    </source>
</evidence>
<accession>C0PWY3</accession>
<proteinExistence type="inferred from homology"/>
<name>BIOF_SALPC</name>